<organism>
    <name type="scientific">Homo sapiens</name>
    <name type="common">Human</name>
    <dbReference type="NCBI Taxonomy" id="9606"/>
    <lineage>
        <taxon>Eukaryota</taxon>
        <taxon>Metazoa</taxon>
        <taxon>Chordata</taxon>
        <taxon>Craniata</taxon>
        <taxon>Vertebrata</taxon>
        <taxon>Euteleostomi</taxon>
        <taxon>Mammalia</taxon>
        <taxon>Eutheria</taxon>
        <taxon>Euarchontoglires</taxon>
        <taxon>Primates</taxon>
        <taxon>Haplorrhini</taxon>
        <taxon>Catarrhini</taxon>
        <taxon>Hominidae</taxon>
        <taxon>Homo</taxon>
    </lineage>
</organism>
<dbReference type="EC" id="2.7.11.15" evidence="11"/>
<dbReference type="EMBL" id="X61157">
    <property type="protein sequence ID" value="CAA43470.1"/>
    <property type="molecule type" value="mRNA"/>
</dbReference>
<dbReference type="EMBL" id="M80776">
    <property type="protein sequence ID" value="AAA58391.1"/>
    <property type="molecule type" value="mRNA"/>
</dbReference>
<dbReference type="EMBL" id="U08438">
    <property type="protein sequence ID" value="AAB60689.1"/>
    <property type="molecule type" value="Genomic_DNA"/>
</dbReference>
<dbReference type="EMBL" id="U08435">
    <property type="protein sequence ID" value="AAB60689.1"/>
    <property type="status" value="JOINED"/>
    <property type="molecule type" value="Genomic_DNA"/>
</dbReference>
<dbReference type="EMBL" id="U08436">
    <property type="protein sequence ID" value="AAB60689.1"/>
    <property type="status" value="JOINED"/>
    <property type="molecule type" value="Genomic_DNA"/>
</dbReference>
<dbReference type="EMBL" id="U08437">
    <property type="protein sequence ID" value="AAB60689.1"/>
    <property type="status" value="JOINED"/>
    <property type="molecule type" value="Genomic_DNA"/>
</dbReference>
<dbReference type="EMBL" id="EU326303">
    <property type="protein sequence ID" value="ACA05909.1"/>
    <property type="molecule type" value="Genomic_DNA"/>
</dbReference>
<dbReference type="EMBL" id="BC037963">
    <property type="protein sequence ID" value="AAH37963.1"/>
    <property type="molecule type" value="mRNA"/>
</dbReference>
<dbReference type="EMBL" id="BC090863">
    <property type="protein sequence ID" value="AAH90863.1"/>
    <property type="molecule type" value="mRNA"/>
</dbReference>
<dbReference type="CCDS" id="CCDS8156.1"/>
<dbReference type="PIR" id="A53791">
    <property type="entry name" value="A53791"/>
</dbReference>
<dbReference type="RefSeq" id="NP_001610.2">
    <property type="nucleotide sequence ID" value="NM_001619.5"/>
</dbReference>
<dbReference type="PDB" id="1BAK">
    <property type="method" value="NMR"/>
    <property type="chains" value="A=556-670"/>
</dbReference>
<dbReference type="PDB" id="3CIK">
    <property type="method" value="X-ray"/>
    <property type="resolution" value="2.75 A"/>
    <property type="chains" value="A=1-689"/>
</dbReference>
<dbReference type="PDB" id="3KRW">
    <property type="method" value="X-ray"/>
    <property type="resolution" value="2.90 A"/>
    <property type="chains" value="A=2-689"/>
</dbReference>
<dbReference type="PDB" id="3KRX">
    <property type="method" value="X-ray"/>
    <property type="resolution" value="3.10 A"/>
    <property type="chains" value="A=2-689"/>
</dbReference>
<dbReference type="PDB" id="3V5W">
    <property type="method" value="X-ray"/>
    <property type="resolution" value="2.07 A"/>
    <property type="chains" value="A=1-689"/>
</dbReference>
<dbReference type="PDB" id="4MK0">
    <property type="method" value="X-ray"/>
    <property type="resolution" value="2.40 A"/>
    <property type="chains" value="A=30-668"/>
</dbReference>
<dbReference type="PDB" id="4PNK">
    <property type="method" value="X-ray"/>
    <property type="resolution" value="2.56 A"/>
    <property type="chains" value="A=1-689"/>
</dbReference>
<dbReference type="PDB" id="5HE1">
    <property type="method" value="X-ray"/>
    <property type="resolution" value="3.15 A"/>
    <property type="chains" value="A=29-670"/>
</dbReference>
<dbReference type="PDB" id="5UKK">
    <property type="method" value="X-ray"/>
    <property type="resolution" value="2.60 A"/>
    <property type="chains" value="A=30-671"/>
</dbReference>
<dbReference type="PDB" id="5UKL">
    <property type="method" value="X-ray"/>
    <property type="resolution" value="2.15 A"/>
    <property type="chains" value="A=30-671"/>
</dbReference>
<dbReference type="PDB" id="5UUU">
    <property type="method" value="X-ray"/>
    <property type="resolution" value="2.70 A"/>
    <property type="chains" value="A=23-538"/>
</dbReference>
<dbReference type="PDB" id="5UVC">
    <property type="method" value="X-ray"/>
    <property type="resolution" value="2.65 A"/>
    <property type="chains" value="A=23-538"/>
</dbReference>
<dbReference type="PDB" id="5WG3">
    <property type="method" value="X-ray"/>
    <property type="resolution" value="2.90 A"/>
    <property type="chains" value="A=1-689"/>
</dbReference>
<dbReference type="PDB" id="5WG4">
    <property type="method" value="X-ray"/>
    <property type="resolution" value="2.31 A"/>
    <property type="chains" value="A=1-689"/>
</dbReference>
<dbReference type="PDB" id="5WG5">
    <property type="method" value="X-ray"/>
    <property type="resolution" value="3.10 A"/>
    <property type="chains" value="A=1-689"/>
</dbReference>
<dbReference type="PDB" id="6C2Y">
    <property type="method" value="X-ray"/>
    <property type="resolution" value="2.74 A"/>
    <property type="chains" value="A=1-689"/>
</dbReference>
<dbReference type="PDB" id="6U7C">
    <property type="method" value="X-ray"/>
    <property type="resolution" value="2.44 A"/>
    <property type="chains" value="A=1-689"/>
</dbReference>
<dbReference type="PDB" id="7K7L">
    <property type="method" value="X-ray"/>
    <property type="resolution" value="2.54 A"/>
    <property type="chains" value="A=30-668"/>
</dbReference>
<dbReference type="PDB" id="7K7Z">
    <property type="method" value="X-ray"/>
    <property type="resolution" value="2.61 A"/>
    <property type="chains" value="A=30-668"/>
</dbReference>
<dbReference type="PDB" id="7PWD">
    <property type="method" value="X-ray"/>
    <property type="resolution" value="2.60 A"/>
    <property type="chains" value="A=1-689"/>
</dbReference>
<dbReference type="PDBsum" id="1BAK"/>
<dbReference type="PDBsum" id="3CIK"/>
<dbReference type="PDBsum" id="3KRW"/>
<dbReference type="PDBsum" id="3KRX"/>
<dbReference type="PDBsum" id="3V5W"/>
<dbReference type="PDBsum" id="4MK0"/>
<dbReference type="PDBsum" id="4PNK"/>
<dbReference type="PDBsum" id="5HE1"/>
<dbReference type="PDBsum" id="5UKK"/>
<dbReference type="PDBsum" id="5UKL"/>
<dbReference type="PDBsum" id="5UUU"/>
<dbReference type="PDBsum" id="5UVC"/>
<dbReference type="PDBsum" id="5WG3"/>
<dbReference type="PDBsum" id="5WG4"/>
<dbReference type="PDBsum" id="5WG5"/>
<dbReference type="PDBsum" id="6C2Y"/>
<dbReference type="PDBsum" id="6U7C"/>
<dbReference type="PDBsum" id="7K7L"/>
<dbReference type="PDBsum" id="7K7Z"/>
<dbReference type="PDBsum" id="7PWD"/>
<dbReference type="SMR" id="P25098"/>
<dbReference type="BioGRID" id="106665">
    <property type="interactions" value="100"/>
</dbReference>
<dbReference type="CORUM" id="P25098"/>
<dbReference type="DIP" id="DIP-42429N"/>
<dbReference type="FunCoup" id="P25098">
    <property type="interactions" value="1801"/>
</dbReference>
<dbReference type="IntAct" id="P25098">
    <property type="interactions" value="43"/>
</dbReference>
<dbReference type="MINT" id="P25098"/>
<dbReference type="STRING" id="9606.ENSP00000312262"/>
<dbReference type="BindingDB" id="P25098"/>
<dbReference type="ChEMBL" id="CHEMBL4079"/>
<dbReference type="DrugBank" id="DB00171">
    <property type="generic name" value="ATP"/>
</dbReference>
<dbReference type="DrugCentral" id="P25098"/>
<dbReference type="GuidetoPHARMACOLOGY" id="1466"/>
<dbReference type="iPTMnet" id="P25098"/>
<dbReference type="PhosphoSitePlus" id="P25098"/>
<dbReference type="BioMuta" id="GRK2"/>
<dbReference type="DMDM" id="126302521"/>
<dbReference type="jPOST" id="P25098"/>
<dbReference type="MassIVE" id="P25098"/>
<dbReference type="PaxDb" id="9606-ENSP00000312262"/>
<dbReference type="PeptideAtlas" id="P25098"/>
<dbReference type="ProteomicsDB" id="54254"/>
<dbReference type="Pumba" id="P25098"/>
<dbReference type="Antibodypedia" id="16429">
    <property type="antibodies" value="720 antibodies from 42 providers"/>
</dbReference>
<dbReference type="DNASU" id="156"/>
<dbReference type="Ensembl" id="ENST00000308595.10">
    <property type="protein sequence ID" value="ENSP00000312262.5"/>
    <property type="gene ID" value="ENSG00000173020.11"/>
</dbReference>
<dbReference type="GeneID" id="156"/>
<dbReference type="KEGG" id="hsa:156"/>
<dbReference type="MANE-Select" id="ENST00000308595.10">
    <property type="protein sequence ID" value="ENSP00000312262.5"/>
    <property type="RefSeq nucleotide sequence ID" value="NM_001619.5"/>
    <property type="RefSeq protein sequence ID" value="NP_001610.2"/>
</dbReference>
<dbReference type="UCSC" id="uc009yrn.2">
    <property type="organism name" value="human"/>
</dbReference>
<dbReference type="AGR" id="HGNC:289"/>
<dbReference type="CTD" id="156"/>
<dbReference type="DisGeNET" id="156"/>
<dbReference type="GeneCards" id="GRK2"/>
<dbReference type="HGNC" id="HGNC:289">
    <property type="gene designation" value="GRK2"/>
</dbReference>
<dbReference type="HPA" id="ENSG00000173020">
    <property type="expression patterns" value="Tissue enhanced (bone)"/>
</dbReference>
<dbReference type="MalaCards" id="GRK2"/>
<dbReference type="MIM" id="109635">
    <property type="type" value="gene"/>
</dbReference>
<dbReference type="neXtProt" id="NX_P25098"/>
<dbReference type="OpenTargets" id="ENSG00000173020"/>
<dbReference type="PharmGKB" id="PA40"/>
<dbReference type="VEuPathDB" id="HostDB:ENSG00000173020"/>
<dbReference type="eggNOG" id="KOG0986">
    <property type="taxonomic scope" value="Eukaryota"/>
</dbReference>
<dbReference type="GeneTree" id="ENSGT00940000161626"/>
<dbReference type="InParanoid" id="P25098"/>
<dbReference type="OMA" id="KSVDWQM"/>
<dbReference type="OrthoDB" id="354826at2759"/>
<dbReference type="PAN-GO" id="P25098">
    <property type="GO annotations" value="6 GO annotations based on evolutionary models"/>
</dbReference>
<dbReference type="PhylomeDB" id="P25098"/>
<dbReference type="TreeFam" id="TF313940"/>
<dbReference type="BRENDA" id="2.7.11.15">
    <property type="organism ID" value="2681"/>
</dbReference>
<dbReference type="PathwayCommons" id="P25098"/>
<dbReference type="Reactome" id="R-HSA-111933">
    <property type="pathway name" value="Calmodulin induced events"/>
</dbReference>
<dbReference type="Reactome" id="R-HSA-416476">
    <property type="pathway name" value="G alpha (q) signalling events"/>
</dbReference>
<dbReference type="Reactome" id="R-HSA-418555">
    <property type="pathway name" value="G alpha (s) signalling events"/>
</dbReference>
<dbReference type="Reactome" id="R-HSA-5635838">
    <property type="pathway name" value="Activation of SMO"/>
</dbReference>
<dbReference type="Reactome" id="R-HSA-8856825">
    <property type="pathway name" value="Cargo recognition for clathrin-mediated endocytosis"/>
</dbReference>
<dbReference type="SignaLink" id="P25098"/>
<dbReference type="SIGNOR" id="P25098"/>
<dbReference type="BioGRID-ORCS" id="156">
    <property type="hits" value="59 hits in 1194 CRISPR screens"/>
</dbReference>
<dbReference type="CD-CODE" id="FB4E32DD">
    <property type="entry name" value="Presynaptic clusters and postsynaptic densities"/>
</dbReference>
<dbReference type="ChiTaRS" id="GRK2">
    <property type="organism name" value="human"/>
</dbReference>
<dbReference type="EvolutionaryTrace" id="P25098"/>
<dbReference type="GeneWiki" id="Beta_adrenergic_receptor_kinase"/>
<dbReference type="GenomeRNAi" id="156"/>
<dbReference type="Pharos" id="P25098">
    <property type="development level" value="Tchem"/>
</dbReference>
<dbReference type="PRO" id="PR:P25098"/>
<dbReference type="Proteomes" id="UP000005640">
    <property type="component" value="Chromosome 11"/>
</dbReference>
<dbReference type="RNAct" id="P25098">
    <property type="molecule type" value="protein"/>
</dbReference>
<dbReference type="Bgee" id="ENSG00000173020">
    <property type="expression patterns" value="Expressed in granulocyte and 151 other cell types or tissues"/>
</dbReference>
<dbReference type="ExpressionAtlas" id="P25098">
    <property type="expression patterns" value="baseline and differential"/>
</dbReference>
<dbReference type="GO" id="GO:0005929">
    <property type="term" value="C:cilium"/>
    <property type="evidence" value="ECO:0000304"/>
    <property type="project" value="Reactome"/>
</dbReference>
<dbReference type="GO" id="GO:0005737">
    <property type="term" value="C:cytoplasm"/>
    <property type="evidence" value="ECO:0000314"/>
    <property type="project" value="BHF-UCL"/>
</dbReference>
<dbReference type="GO" id="GO:0032473">
    <property type="term" value="C:cytoplasmic side of mitochondrial outer membrane"/>
    <property type="evidence" value="ECO:0000314"/>
    <property type="project" value="FlyBase"/>
</dbReference>
<dbReference type="GO" id="GO:0005829">
    <property type="term" value="C:cytosol"/>
    <property type="evidence" value="ECO:0000314"/>
    <property type="project" value="FlyBase"/>
</dbReference>
<dbReference type="GO" id="GO:0016020">
    <property type="term" value="C:membrane"/>
    <property type="evidence" value="ECO:0007005"/>
    <property type="project" value="UniProtKB"/>
</dbReference>
<dbReference type="GO" id="GO:0005886">
    <property type="term" value="C:plasma membrane"/>
    <property type="evidence" value="ECO:0000304"/>
    <property type="project" value="Reactome"/>
</dbReference>
<dbReference type="GO" id="GO:0098794">
    <property type="term" value="C:postsynapse"/>
    <property type="evidence" value="ECO:0007669"/>
    <property type="project" value="UniProtKB-SubCell"/>
</dbReference>
<dbReference type="GO" id="GO:0098793">
    <property type="term" value="C:presynapse"/>
    <property type="evidence" value="ECO:0007669"/>
    <property type="project" value="UniProtKB-SubCell"/>
</dbReference>
<dbReference type="GO" id="GO:0031694">
    <property type="term" value="F:alpha-2A adrenergic receptor binding"/>
    <property type="evidence" value="ECO:0000250"/>
    <property type="project" value="BHF-UCL"/>
</dbReference>
<dbReference type="GO" id="GO:0005524">
    <property type="term" value="F:ATP binding"/>
    <property type="evidence" value="ECO:0007669"/>
    <property type="project" value="UniProtKB-KW"/>
</dbReference>
<dbReference type="GO" id="GO:0047696">
    <property type="term" value="F:beta-adrenergic receptor kinase activity"/>
    <property type="evidence" value="ECO:0000304"/>
    <property type="project" value="Reactome"/>
</dbReference>
<dbReference type="GO" id="GO:0031755">
    <property type="term" value="F:Edg-2 lysophosphatidic acid receptor binding"/>
    <property type="evidence" value="ECO:0000314"/>
    <property type="project" value="UniProtKB"/>
</dbReference>
<dbReference type="GO" id="GO:0001664">
    <property type="term" value="F:G protein-coupled receptor binding"/>
    <property type="evidence" value="ECO:0000318"/>
    <property type="project" value="GO_Central"/>
</dbReference>
<dbReference type="GO" id="GO:0004703">
    <property type="term" value="F:G protein-coupled receptor kinase activity"/>
    <property type="evidence" value="ECO:0000315"/>
    <property type="project" value="UniProtKB"/>
</dbReference>
<dbReference type="GO" id="GO:0004672">
    <property type="term" value="F:protein kinase activity"/>
    <property type="evidence" value="ECO:0000315"/>
    <property type="project" value="FlyBase"/>
</dbReference>
<dbReference type="GO" id="GO:0060048">
    <property type="term" value="P:cardiac muscle contraction"/>
    <property type="evidence" value="ECO:0000315"/>
    <property type="project" value="BHF-UCL"/>
</dbReference>
<dbReference type="GO" id="GO:0002029">
    <property type="term" value="P:desensitization of G protein-coupled receptor signaling pathway"/>
    <property type="evidence" value="ECO:0000315"/>
    <property type="project" value="UniProtKB"/>
</dbReference>
<dbReference type="GO" id="GO:0007213">
    <property type="term" value="P:G protein-coupled acetylcholine receptor signaling pathway"/>
    <property type="evidence" value="ECO:0000250"/>
    <property type="project" value="BHF-UCL"/>
</dbReference>
<dbReference type="GO" id="GO:0007186">
    <property type="term" value="P:G protein-coupled receptor signaling pathway"/>
    <property type="evidence" value="ECO:0000318"/>
    <property type="project" value="GO_Central"/>
</dbReference>
<dbReference type="GO" id="GO:0007507">
    <property type="term" value="P:heart development"/>
    <property type="evidence" value="ECO:0007669"/>
    <property type="project" value="Ensembl"/>
</dbReference>
<dbReference type="GO" id="GO:1901081">
    <property type="term" value="P:negative regulation of relaxation of smooth muscle"/>
    <property type="evidence" value="ECO:0000315"/>
    <property type="project" value="UniProtKB"/>
</dbReference>
<dbReference type="GO" id="GO:0045988">
    <property type="term" value="P:negative regulation of striated muscle contraction"/>
    <property type="evidence" value="ECO:0000315"/>
    <property type="project" value="BHF-UCL"/>
</dbReference>
<dbReference type="GO" id="GO:0003108">
    <property type="term" value="P:negative regulation of the force of heart contraction by chemical signal"/>
    <property type="evidence" value="ECO:0000315"/>
    <property type="project" value="BHF-UCL"/>
</dbReference>
<dbReference type="GO" id="GO:0033605">
    <property type="term" value="P:positive regulation of catecholamine secretion"/>
    <property type="evidence" value="ECO:0000250"/>
    <property type="project" value="BHF-UCL"/>
</dbReference>
<dbReference type="GO" id="GO:0031623">
    <property type="term" value="P:receptor internalization"/>
    <property type="evidence" value="ECO:0000314"/>
    <property type="project" value="UniProtKB"/>
</dbReference>
<dbReference type="GO" id="GO:0002026">
    <property type="term" value="P:regulation of the force of heart contraction"/>
    <property type="evidence" value="ECO:0000318"/>
    <property type="project" value="GO_Central"/>
</dbReference>
<dbReference type="GO" id="GO:0046718">
    <property type="term" value="P:symbiont entry into host cell"/>
    <property type="evidence" value="ECO:0000315"/>
    <property type="project" value="CACAO"/>
</dbReference>
<dbReference type="GO" id="GO:0007217">
    <property type="term" value="P:tachykinin receptor signaling pathway"/>
    <property type="evidence" value="ECO:0000314"/>
    <property type="project" value="BHF-UCL"/>
</dbReference>
<dbReference type="GO" id="GO:0019079">
    <property type="term" value="P:viral genome replication"/>
    <property type="evidence" value="ECO:0000315"/>
    <property type="project" value="CACAO"/>
</dbReference>
<dbReference type="CDD" id="cd01240">
    <property type="entry name" value="PH_GRK2_subgroup"/>
    <property type="match status" value="1"/>
</dbReference>
<dbReference type="CDD" id="cd08747">
    <property type="entry name" value="RGS_GRK2_GRK3"/>
    <property type="match status" value="1"/>
</dbReference>
<dbReference type="CDD" id="cd14223">
    <property type="entry name" value="STKc_GRK2"/>
    <property type="match status" value="1"/>
</dbReference>
<dbReference type="FunFam" id="1.10.510.10:FF:000118">
    <property type="entry name" value="G protein-coupled receptor kinase"/>
    <property type="match status" value="1"/>
</dbReference>
<dbReference type="FunFam" id="2.30.29.30:FF:000084">
    <property type="entry name" value="G protein-coupled receptor kinase"/>
    <property type="match status" value="1"/>
</dbReference>
<dbReference type="FunFam" id="3.30.200.20:FF:000068">
    <property type="entry name" value="G protein-coupled receptor kinase"/>
    <property type="match status" value="1"/>
</dbReference>
<dbReference type="Gene3D" id="3.30.200.20">
    <property type="entry name" value="Phosphorylase Kinase, domain 1"/>
    <property type="match status" value="1"/>
</dbReference>
<dbReference type="Gene3D" id="2.30.29.30">
    <property type="entry name" value="Pleckstrin-homology domain (PH domain)/Phosphotyrosine-binding domain (PTB)"/>
    <property type="match status" value="1"/>
</dbReference>
<dbReference type="Gene3D" id="1.10.167.10">
    <property type="entry name" value="Regulator of G-protein Signalling 4, domain 2"/>
    <property type="match status" value="1"/>
</dbReference>
<dbReference type="Gene3D" id="1.10.510.10">
    <property type="entry name" value="Transferase(Phosphotransferase) domain 1"/>
    <property type="match status" value="1"/>
</dbReference>
<dbReference type="InterPro" id="IPR000961">
    <property type="entry name" value="AGC-kinase_C"/>
</dbReference>
<dbReference type="InterPro" id="IPR000239">
    <property type="entry name" value="GPCR_kinase"/>
</dbReference>
<dbReference type="InterPro" id="IPR011009">
    <property type="entry name" value="Kinase-like_dom_sf"/>
</dbReference>
<dbReference type="InterPro" id="IPR011993">
    <property type="entry name" value="PH-like_dom_sf"/>
</dbReference>
<dbReference type="InterPro" id="IPR001849">
    <property type="entry name" value="PH_domain"/>
</dbReference>
<dbReference type="InterPro" id="IPR000719">
    <property type="entry name" value="Prot_kinase_dom"/>
</dbReference>
<dbReference type="InterPro" id="IPR017441">
    <property type="entry name" value="Protein_kinase_ATP_BS"/>
</dbReference>
<dbReference type="InterPro" id="IPR016137">
    <property type="entry name" value="RGS"/>
</dbReference>
<dbReference type="InterPro" id="IPR036305">
    <property type="entry name" value="RGS_sf"/>
</dbReference>
<dbReference type="InterPro" id="IPR044926">
    <property type="entry name" value="RGS_subdomain_2"/>
</dbReference>
<dbReference type="InterPro" id="IPR008271">
    <property type="entry name" value="Ser/Thr_kinase_AS"/>
</dbReference>
<dbReference type="PANTHER" id="PTHR24355:SF22">
    <property type="entry name" value="BETA-ADRENERGIC RECEPTOR KINASE 1"/>
    <property type="match status" value="1"/>
</dbReference>
<dbReference type="PANTHER" id="PTHR24355">
    <property type="entry name" value="G PROTEIN-COUPLED RECEPTOR KINASE/RIBOSOMAL PROTEIN S6 KINASE"/>
    <property type="match status" value="1"/>
</dbReference>
<dbReference type="Pfam" id="PF00169">
    <property type="entry name" value="PH"/>
    <property type="match status" value="1"/>
</dbReference>
<dbReference type="Pfam" id="PF00069">
    <property type="entry name" value="Pkinase"/>
    <property type="match status" value="1"/>
</dbReference>
<dbReference type="Pfam" id="PF00615">
    <property type="entry name" value="RGS"/>
    <property type="match status" value="1"/>
</dbReference>
<dbReference type="PRINTS" id="PR00717">
    <property type="entry name" value="GPCRKINASE"/>
</dbReference>
<dbReference type="SMART" id="SM00233">
    <property type="entry name" value="PH"/>
    <property type="match status" value="1"/>
</dbReference>
<dbReference type="SMART" id="SM00315">
    <property type="entry name" value="RGS"/>
    <property type="match status" value="1"/>
</dbReference>
<dbReference type="SMART" id="SM00133">
    <property type="entry name" value="S_TK_X"/>
    <property type="match status" value="1"/>
</dbReference>
<dbReference type="SMART" id="SM00220">
    <property type="entry name" value="S_TKc"/>
    <property type="match status" value="1"/>
</dbReference>
<dbReference type="SUPFAM" id="SSF50729">
    <property type="entry name" value="PH domain-like"/>
    <property type="match status" value="1"/>
</dbReference>
<dbReference type="SUPFAM" id="SSF56112">
    <property type="entry name" value="Protein kinase-like (PK-like)"/>
    <property type="match status" value="1"/>
</dbReference>
<dbReference type="SUPFAM" id="SSF48097">
    <property type="entry name" value="Regulator of G-protein signaling, RGS"/>
    <property type="match status" value="1"/>
</dbReference>
<dbReference type="PROSITE" id="PS51285">
    <property type="entry name" value="AGC_KINASE_CTER"/>
    <property type="match status" value="1"/>
</dbReference>
<dbReference type="PROSITE" id="PS50003">
    <property type="entry name" value="PH_DOMAIN"/>
    <property type="match status" value="1"/>
</dbReference>
<dbReference type="PROSITE" id="PS00107">
    <property type="entry name" value="PROTEIN_KINASE_ATP"/>
    <property type="match status" value="1"/>
</dbReference>
<dbReference type="PROSITE" id="PS50011">
    <property type="entry name" value="PROTEIN_KINASE_DOM"/>
    <property type="match status" value="1"/>
</dbReference>
<dbReference type="PROSITE" id="PS00108">
    <property type="entry name" value="PROTEIN_KINASE_ST"/>
    <property type="match status" value="1"/>
</dbReference>
<dbReference type="PROSITE" id="PS50132">
    <property type="entry name" value="RGS"/>
    <property type="match status" value="1"/>
</dbReference>
<feature type="chain" id="PRO_0000085627" description="Beta-adrenergic receptor kinase 1">
    <location>
        <begin position="1"/>
        <end position="689"/>
    </location>
</feature>
<feature type="domain" description="RGS" evidence="5">
    <location>
        <begin position="54"/>
        <end position="175"/>
    </location>
</feature>
<feature type="domain" description="Protein kinase" evidence="4">
    <location>
        <begin position="191"/>
        <end position="453"/>
    </location>
</feature>
<feature type="domain" description="AGC-kinase C-terminal" evidence="6">
    <location>
        <begin position="454"/>
        <end position="521"/>
    </location>
</feature>
<feature type="domain" description="PH" evidence="3">
    <location>
        <begin position="558"/>
        <end position="652"/>
    </location>
</feature>
<feature type="region of interest" description="N-terminal">
    <location>
        <begin position="1"/>
        <end position="190"/>
    </location>
</feature>
<feature type="active site" description="Proton acceptor" evidence="4 7">
    <location>
        <position position="317"/>
    </location>
</feature>
<feature type="binding site" evidence="4">
    <location>
        <begin position="197"/>
        <end position="205"/>
    </location>
    <ligand>
        <name>ATP</name>
        <dbReference type="ChEBI" id="CHEBI:30616"/>
    </ligand>
</feature>
<feature type="binding site" evidence="4">
    <location>
        <position position="220"/>
    </location>
    <ligand>
        <name>ATP</name>
        <dbReference type="ChEBI" id="CHEBI:30616"/>
    </ligand>
</feature>
<feature type="site" description="Required for receptor phosphorylation" evidence="11">
    <location>
        <position position="3"/>
    </location>
</feature>
<feature type="site" description="Required for receptor phosphorylation" evidence="11">
    <location>
        <position position="4"/>
    </location>
</feature>
<feature type="site" description="Required for receptor phosphorylation" evidence="11">
    <location>
        <position position="10"/>
    </location>
</feature>
<feature type="modified residue" description="Phosphoserine" evidence="16 17">
    <location>
        <position position="670"/>
    </location>
</feature>
<feature type="sequence variant" id="VAR_040378" description="In dbSNP:rs55696045." evidence="9">
    <original>I</original>
    <variation>T</variation>
    <location>
        <position position="184"/>
    </location>
</feature>
<feature type="sequence variant" id="VAR_040379" description="In a colorectal adenocarcinoma sample; somatic mutation." evidence="9">
    <original>R</original>
    <variation>Q</variation>
    <location>
        <position position="578"/>
    </location>
</feature>
<feature type="mutagenesis site" description="85% reduction in phosphorylation of G-protein coupled receptor rhodopsin." evidence="11">
    <original>D</original>
    <variation>A</variation>
    <location>
        <position position="3"/>
    </location>
</feature>
<feature type="mutagenesis site" description="95% reduction in phosphorylation of G-protein coupled receptor rhodopsin. 60% reduction in phosphorylation of beta-2 adrenergic receptor ADRB2. Does not affect binding to ADRB2. Not activated by receptor binding. No effect on phosphorylation of the non-receptor substrate tubulin." evidence="11">
    <original>D</original>
    <variation>K</variation>
    <location>
        <position position="3"/>
    </location>
</feature>
<feature type="mutagenesis site" description="60% reduction in phosphorylation of G-protein coupled receptor rhodopsin." evidence="11">
    <original>D</original>
    <variation>N</variation>
    <location>
        <position position="3"/>
    </location>
</feature>
<feature type="mutagenesis site" description="95% reduction in phosphorylation of G-protein coupled receptor rhodopsin. 90% reduction in phosphorylation of beta-2 adrenergic receptor ADRB2. Does not affect binding to ADRB2. Not activated by receptor binding. No effect on phosphorylation of the non-receptor substrate tubulin." evidence="11">
    <original>L</original>
    <variation>A</variation>
    <location>
        <position position="4"/>
    </location>
</feature>
<feature type="mutagenesis site" description="95% reduction in phosphorylation of G-protein coupled receptor rhodopsin." evidence="11">
    <original>L</original>
    <variation>K</variation>
    <location>
        <position position="4"/>
    </location>
</feature>
<feature type="mutagenesis site" description="50% reduction in phosphorylation of G-protein coupled receptor rhodopsin." evidence="11">
    <original>E</original>
    <variation>A</variation>
    <location>
        <position position="5"/>
    </location>
</feature>
<feature type="mutagenesis site" description="95% reduction in phosphorylation of G-protein coupled receptor rhodopsin." evidence="11">
    <original>VL</original>
    <variation>AA</variation>
    <location>
        <begin position="7"/>
        <end position="8"/>
    </location>
</feature>
<feature type="mutagenesis site" description="95% reduction in phosphorylation of G-protein coupled receptor rhodopsin and beta-2 adrenergic receptor ADRB2. Does not affect binding to ADRB2. Not activated by receptor binding. No effect on phosphorylation of the non-receptor substrate tubulin." evidence="11">
    <original>D</original>
    <variation>A</variation>
    <location>
        <position position="10"/>
    </location>
</feature>
<feature type="sequence conflict" description="In Ref. 3; AAB60689." evidence="13" ref="3">
    <original>SDKFTRFCQWKNVELNIH</original>
    <variation>RISSHGFASGRMWSSTST</variation>
    <location>
        <begin position="168"/>
        <end position="185"/>
    </location>
</feature>
<feature type="sequence conflict" description="In Ref. 1; CAA43470 and 3; AAB60689." evidence="13" ref="1 3">
    <original>A</original>
    <variation>R</variation>
    <location>
        <position position="211"/>
    </location>
</feature>
<feature type="sequence conflict" description="In Ref. 1; CAA43470 and 3; AAB60689." evidence="13" ref="1 3">
    <original>R</original>
    <variation>H</variation>
    <location>
        <position position="422"/>
    </location>
</feature>
<feature type="sequence conflict" description="In Ref. 1; CAA43470." evidence="13" ref="1">
    <original>K</original>
    <variation>R</variation>
    <location>
        <position position="465"/>
    </location>
</feature>
<feature type="helix" evidence="20">
    <location>
        <begin position="39"/>
        <end position="49"/>
    </location>
</feature>
<feature type="helix" evidence="20">
    <location>
        <begin position="55"/>
        <end position="59"/>
    </location>
</feature>
<feature type="helix" evidence="20">
    <location>
        <begin position="62"/>
        <end position="75"/>
    </location>
</feature>
<feature type="helix" evidence="20">
    <location>
        <begin position="77"/>
        <end position="79"/>
    </location>
</feature>
<feature type="helix" evidence="20">
    <location>
        <begin position="80"/>
        <end position="93"/>
    </location>
</feature>
<feature type="helix" evidence="20">
    <location>
        <begin position="98"/>
        <end position="109"/>
    </location>
</feature>
<feature type="helix" evidence="20">
    <location>
        <begin position="112"/>
        <end position="118"/>
    </location>
</feature>
<feature type="strand" evidence="20">
    <location>
        <begin position="119"/>
        <end position="122"/>
    </location>
</feature>
<feature type="helix" evidence="20">
    <location>
        <begin position="126"/>
        <end position="137"/>
    </location>
</feature>
<feature type="turn" evidence="20">
    <location>
        <begin position="143"/>
        <end position="146"/>
    </location>
</feature>
<feature type="helix" evidence="20">
    <location>
        <begin position="147"/>
        <end position="157"/>
    </location>
</feature>
<feature type="helix" evidence="20">
    <location>
        <begin position="160"/>
        <end position="167"/>
    </location>
</feature>
<feature type="helix" evidence="20">
    <location>
        <begin position="169"/>
        <end position="181"/>
    </location>
</feature>
<feature type="helix" evidence="20">
    <location>
        <begin position="188"/>
        <end position="190"/>
    </location>
</feature>
<feature type="strand" evidence="20">
    <location>
        <begin position="191"/>
        <end position="199"/>
    </location>
</feature>
<feature type="strand" evidence="20">
    <location>
        <begin position="201"/>
        <end position="210"/>
    </location>
</feature>
<feature type="turn" evidence="20">
    <location>
        <begin position="211"/>
        <end position="213"/>
    </location>
</feature>
<feature type="strand" evidence="20">
    <location>
        <begin position="216"/>
        <end position="223"/>
    </location>
</feature>
<feature type="helix" evidence="20">
    <location>
        <begin position="224"/>
        <end position="229"/>
    </location>
</feature>
<feature type="helix" evidence="20">
    <location>
        <begin position="233"/>
        <end position="246"/>
    </location>
</feature>
<feature type="strand" evidence="20">
    <location>
        <begin position="247"/>
        <end position="249"/>
    </location>
</feature>
<feature type="strand" evidence="19">
    <location>
        <begin position="252"/>
        <end position="254"/>
    </location>
</feature>
<feature type="strand" evidence="20">
    <location>
        <begin position="257"/>
        <end position="262"/>
    </location>
</feature>
<feature type="strand" evidence="20">
    <location>
        <begin position="264"/>
        <end position="271"/>
    </location>
</feature>
<feature type="strand" evidence="22">
    <location>
        <begin position="276"/>
        <end position="278"/>
    </location>
</feature>
<feature type="helix" evidence="20">
    <location>
        <begin position="279"/>
        <end position="286"/>
    </location>
</feature>
<feature type="helix" evidence="20">
    <location>
        <begin position="291"/>
        <end position="309"/>
    </location>
</feature>
<feature type="turn" evidence="20">
    <location>
        <begin position="310"/>
        <end position="312"/>
    </location>
</feature>
<feature type="helix" evidence="20">
    <location>
        <begin position="320"/>
        <end position="322"/>
    </location>
</feature>
<feature type="strand" evidence="20">
    <location>
        <begin position="323"/>
        <end position="325"/>
    </location>
</feature>
<feature type="strand" evidence="25">
    <location>
        <begin position="327"/>
        <end position="329"/>
    </location>
</feature>
<feature type="strand" evidence="20">
    <location>
        <begin position="331"/>
        <end position="333"/>
    </location>
</feature>
<feature type="helix" evidence="18">
    <location>
        <begin position="336"/>
        <end position="338"/>
    </location>
</feature>
<feature type="strand" evidence="25">
    <location>
        <begin position="343"/>
        <end position="345"/>
    </location>
</feature>
<feature type="helix" evidence="20">
    <location>
        <begin position="354"/>
        <end position="356"/>
    </location>
</feature>
<feature type="helix" evidence="20">
    <location>
        <begin position="359"/>
        <end position="362"/>
    </location>
</feature>
<feature type="strand" evidence="27">
    <location>
        <begin position="363"/>
        <end position="365"/>
    </location>
</feature>
<feature type="helix" evidence="20">
    <location>
        <begin position="371"/>
        <end position="386"/>
    </location>
</feature>
<feature type="strand" evidence="26">
    <location>
        <begin position="390"/>
        <end position="392"/>
    </location>
</feature>
<feature type="helix" evidence="20">
    <location>
        <begin position="393"/>
        <end position="395"/>
    </location>
</feature>
<feature type="helix" evidence="20">
    <location>
        <begin position="399"/>
        <end position="408"/>
    </location>
</feature>
<feature type="strand" evidence="19">
    <location>
        <begin position="415"/>
        <end position="417"/>
    </location>
</feature>
<feature type="helix" evidence="20">
    <location>
        <begin position="419"/>
        <end position="428"/>
    </location>
</feature>
<feature type="helix" evidence="20">
    <location>
        <begin position="433"/>
        <end position="435"/>
    </location>
</feature>
<feature type="strand" evidence="20">
    <location>
        <begin position="440"/>
        <end position="442"/>
    </location>
</feature>
<feature type="helix" evidence="20">
    <location>
        <begin position="444"/>
        <end position="447"/>
    </location>
</feature>
<feature type="helix" evidence="20">
    <location>
        <begin position="451"/>
        <end position="453"/>
    </location>
</feature>
<feature type="helix" evidence="20">
    <location>
        <begin position="458"/>
        <end position="462"/>
    </location>
</feature>
<feature type="turn" evidence="23">
    <location>
        <begin position="477"/>
        <end position="480"/>
    </location>
</feature>
<feature type="turn" evidence="24">
    <location>
        <begin position="492"/>
        <end position="495"/>
    </location>
</feature>
<feature type="helix" evidence="20">
    <location>
        <begin position="500"/>
        <end position="503"/>
    </location>
</feature>
<feature type="turn" evidence="20">
    <location>
        <begin position="504"/>
        <end position="508"/>
    </location>
</feature>
<feature type="helix" evidence="20">
    <location>
        <begin position="514"/>
        <end position="522"/>
    </location>
</feature>
<feature type="turn" evidence="20">
    <location>
        <begin position="523"/>
        <end position="525"/>
    </location>
</feature>
<feature type="helix" evidence="20">
    <location>
        <begin position="526"/>
        <end position="546"/>
    </location>
</feature>
<feature type="strand" evidence="20">
    <location>
        <begin position="555"/>
        <end position="557"/>
    </location>
</feature>
<feature type="strand" evidence="20">
    <location>
        <begin position="561"/>
        <end position="568"/>
    </location>
</feature>
<feature type="turn" evidence="23">
    <location>
        <begin position="571"/>
        <end position="573"/>
    </location>
</feature>
<feature type="strand" evidence="20">
    <location>
        <begin position="577"/>
        <end position="584"/>
    </location>
</feature>
<feature type="strand" evidence="20">
    <location>
        <begin position="587"/>
        <end position="591"/>
    </location>
</feature>
<feature type="strand" evidence="21">
    <location>
        <begin position="593"/>
        <end position="595"/>
    </location>
</feature>
<feature type="strand" evidence="20">
    <location>
        <begin position="599"/>
        <end position="602"/>
    </location>
</feature>
<feature type="helix" evidence="20">
    <location>
        <begin position="603"/>
        <end position="605"/>
    </location>
</feature>
<feature type="strand" evidence="20">
    <location>
        <begin position="606"/>
        <end position="616"/>
    </location>
</feature>
<feature type="strand" evidence="20">
    <location>
        <begin position="618"/>
        <end position="624"/>
    </location>
</feature>
<feature type="turn" evidence="20">
    <location>
        <begin position="625"/>
        <end position="627"/>
    </location>
</feature>
<feature type="strand" evidence="20">
    <location>
        <begin position="628"/>
        <end position="633"/>
    </location>
</feature>
<feature type="helix" evidence="20">
    <location>
        <begin position="637"/>
        <end position="658"/>
    </location>
</feature>
<feature type="turn" evidence="20">
    <location>
        <begin position="662"/>
        <end position="664"/>
    </location>
</feature>
<name>ARBK1_HUMAN</name>
<sequence>MADLEAVLADVSYLMAMEKSKATPAARASKKILLPEPSIRSVMQKYLEDRGEVTFEKIFSQKLGYLLFRDFCLNHLEEARPLVEFYEEIKKYEKLETEEERVARSREIFDSYIMKELLACSHPFSKSATEHVQGHLGKKQVPPDLFQPYIEEICQNLRGDVFQKFIESDKFTRFCQWKNVELNIHLTMNDFSVHRIIGRGGFGEVYGCRKADTGKMYAMKCLDKKRIKMKQGETLALNERIMLSLVSTGDCPFIVCMSYAFHTPDKLSFILDLMNGGDLHYHLSQHGVFSEADMRFYAAEIILGLEHMHNRFVVYRDLKPANILLDEHGHVRISDLGLACDFSKKKPHASVGTHGYMAPEVLQKGVAYDSSADWFSLGCMLFKLLRGHSPFRQHKTKDKHEIDRMTLTMAVELPDSFSPELRSLLEGLLQRDVNRRLGCLGRGAQEVKESPFFRSLDWQMVFLQKYPPPLIPPRGEVNAADAFDIGSFDEEDTKGIKLLDSDQELYRNFPLTISERWQQEVAETVFDTINAETDRLEARKKAKNKQLGHEEDYALGKDCIMHGYMSKMGNPFLTQWQRRYFYLFPNRLEWRGEGEAPQSLLTMEEIQSVEETQIKERKCLLLKIRGGKQFILQCDSDPELVQWKKELRDAYREAQQLVQRVPKMKNKPRSPVVELSKVPLVQRGSANGL</sequence>
<accession>P25098</accession>
<accession>B0ZBE1</accession>
<accession>Q13837</accession>
<accession>Q6GTT3</accession>
<evidence type="ECO:0000250" key="1">
    <source>
        <dbReference type="UniProtKB" id="P21146"/>
    </source>
</evidence>
<evidence type="ECO:0000250" key="2">
    <source>
        <dbReference type="UniProtKB" id="P26817"/>
    </source>
</evidence>
<evidence type="ECO:0000255" key="3">
    <source>
        <dbReference type="PROSITE-ProRule" id="PRU00145"/>
    </source>
</evidence>
<evidence type="ECO:0000255" key="4">
    <source>
        <dbReference type="PROSITE-ProRule" id="PRU00159"/>
    </source>
</evidence>
<evidence type="ECO:0000255" key="5">
    <source>
        <dbReference type="PROSITE-ProRule" id="PRU00171"/>
    </source>
</evidence>
<evidence type="ECO:0000255" key="6">
    <source>
        <dbReference type="PROSITE-ProRule" id="PRU00618"/>
    </source>
</evidence>
<evidence type="ECO:0000255" key="7">
    <source>
        <dbReference type="PROSITE-ProRule" id="PRU10027"/>
    </source>
</evidence>
<evidence type="ECO:0000269" key="8">
    <source>
    </source>
</evidence>
<evidence type="ECO:0000269" key="9">
    <source>
    </source>
</evidence>
<evidence type="ECO:0000269" key="10">
    <source>
    </source>
</evidence>
<evidence type="ECO:0000269" key="11">
    <source>
    </source>
</evidence>
<evidence type="ECO:0000269" key="12">
    <source>
    </source>
</evidence>
<evidence type="ECO:0000305" key="13"/>
<evidence type="ECO:0000305" key="14">
    <source>
    </source>
</evidence>
<evidence type="ECO:0000312" key="15">
    <source>
        <dbReference type="HGNC" id="HGNC:289"/>
    </source>
</evidence>
<evidence type="ECO:0007744" key="16">
    <source>
    </source>
</evidence>
<evidence type="ECO:0007744" key="17">
    <source>
    </source>
</evidence>
<evidence type="ECO:0007829" key="18">
    <source>
        <dbReference type="PDB" id="3CIK"/>
    </source>
</evidence>
<evidence type="ECO:0007829" key="19">
    <source>
        <dbReference type="PDB" id="3KRW"/>
    </source>
</evidence>
<evidence type="ECO:0007829" key="20">
    <source>
        <dbReference type="PDB" id="3V5W"/>
    </source>
</evidence>
<evidence type="ECO:0007829" key="21">
    <source>
        <dbReference type="PDB" id="4MK0"/>
    </source>
</evidence>
<evidence type="ECO:0007829" key="22">
    <source>
        <dbReference type="PDB" id="5HE1"/>
    </source>
</evidence>
<evidence type="ECO:0007829" key="23">
    <source>
        <dbReference type="PDB" id="5UKL"/>
    </source>
</evidence>
<evidence type="ECO:0007829" key="24">
    <source>
        <dbReference type="PDB" id="5UUU"/>
    </source>
</evidence>
<evidence type="ECO:0007829" key="25">
    <source>
        <dbReference type="PDB" id="5WG4"/>
    </source>
</evidence>
<evidence type="ECO:0007829" key="26">
    <source>
        <dbReference type="PDB" id="5WG5"/>
    </source>
</evidence>
<evidence type="ECO:0007829" key="27">
    <source>
        <dbReference type="PDB" id="7K7L"/>
    </source>
</evidence>
<keyword id="KW-0002">3D-structure</keyword>
<keyword id="KW-0067">ATP-binding</keyword>
<keyword id="KW-1003">Cell membrane</keyword>
<keyword id="KW-0966">Cell projection</keyword>
<keyword id="KW-0963">Cytoplasm</keyword>
<keyword id="KW-0418">Kinase</keyword>
<keyword id="KW-0472">Membrane</keyword>
<keyword id="KW-0547">Nucleotide-binding</keyword>
<keyword id="KW-0597">Phosphoprotein</keyword>
<keyword id="KW-1267">Proteomics identification</keyword>
<keyword id="KW-1185">Reference proteome</keyword>
<keyword id="KW-0723">Serine/threonine-protein kinase</keyword>
<keyword id="KW-0770">Synapse</keyword>
<keyword id="KW-0808">Transferase</keyword>
<gene>
    <name evidence="15" type="primary">GRK2</name>
    <name type="synonym">ADRBK1</name>
    <name type="synonym">BARK</name>
    <name type="synonym">BARK1</name>
</gene>
<reference key="1">
    <citation type="journal article" date="1991" name="FEBS Lett.">
        <title>cDNA cloning and chromosomal localization of the human beta-adrenergic receptor kinase.</title>
        <authorList>
            <person name="Benovic J.L."/>
            <person name="Stone W.C."/>
            <person name="Huebner K."/>
            <person name="Croce C."/>
            <person name="Caron M.G."/>
            <person name="Lefkowitz R.J."/>
        </authorList>
    </citation>
    <scope>NUCLEOTIDE SEQUENCE [MRNA]</scope>
</reference>
<reference key="2">
    <citation type="journal article" date="1992" name="J. Biol. Chem.">
        <title>High expression of beta-adrenergic receptor kinase in human peripheral blood leukocytes. Isoproterenol and platelet activating factor can induce kinase translocation.</title>
        <authorList>
            <person name="Chuang T.T."/>
            <person name="Sallese M."/>
            <person name="Ambrosini G."/>
            <person name="Parruti G."/>
            <person name="de Blasi A."/>
        </authorList>
    </citation>
    <scope>NUCLEOTIDE SEQUENCE [MRNA]</scope>
    <source>
        <tissue>Blood</tissue>
    </source>
</reference>
<reference key="3">
    <citation type="journal article" date="1994" name="J. Biol. Chem.">
        <title>Structure of the human gene encoding the beta-adrenergic receptor kinase.</title>
        <authorList>
            <person name="Penn R.B."/>
            <person name="Benovic J.L."/>
        </authorList>
    </citation>
    <scope>NUCLEOTIDE SEQUENCE [GENOMIC DNA]</scope>
</reference>
<reference key="4">
    <citation type="submission" date="2007-12" db="EMBL/GenBank/DDBJ databases">
        <authorList>
            <consortium name="NHLBI resequencing and genotyping service (RS&amp;G)"/>
        </authorList>
    </citation>
    <scope>NUCLEOTIDE SEQUENCE [GENOMIC DNA]</scope>
</reference>
<reference key="5">
    <citation type="journal article" date="2004" name="Genome Res.">
        <title>The status, quality, and expansion of the NIH full-length cDNA project: the Mammalian Gene Collection (MGC).</title>
        <authorList>
            <consortium name="The MGC Project Team"/>
        </authorList>
    </citation>
    <scope>NUCLEOTIDE SEQUENCE [LARGE SCALE MRNA]</scope>
    <source>
        <tissue>PNS</tissue>
        <tissue>Testis</tissue>
    </source>
</reference>
<reference key="6">
    <citation type="journal article" date="1998" name="Proc. Natl. Acad. Sci. U.S.A.">
        <title>Monocyte chemoattractant protein-1-induced CCR2B receptor desensitization mediated by the G protein-coupled receptor kinase 2.</title>
        <authorList>
            <person name="Aragay A.M."/>
            <person name="Mellado M."/>
            <person name="Frade J.M."/>
            <person name="Martin A.M."/>
            <person name="Jimenez-Sainz M.C."/>
            <person name="Martinez-A C."/>
            <person name="Mayor F. Jr."/>
        </authorList>
    </citation>
    <scope>INTERACTION WITH ARRB1</scope>
</reference>
<reference key="7">
    <citation type="journal article" date="1999" name="J. Biol. Chem.">
        <title>Differential effects of CC chemokines on CC chemokine receptor 5 (CCR5) phosphorylation and identification of phosphorylation sites on the CCR5 carboxyl terminus.</title>
        <authorList>
            <person name="Oppermann M."/>
            <person name="Mack M."/>
            <person name="Proudfoot A.E."/>
            <person name="Olbrich H."/>
        </authorList>
    </citation>
    <scope>INTERACTION WITH CCR5</scope>
    <scope>TISSUE SPECIFICITY</scope>
</reference>
<reference key="8">
    <citation type="journal article" date="2008" name="J. Proteome Res.">
        <title>Phosphoproteome of resting human platelets.</title>
        <authorList>
            <person name="Zahedi R.P."/>
            <person name="Lewandrowski U."/>
            <person name="Wiesner J."/>
            <person name="Wortelkamp S."/>
            <person name="Moebius J."/>
            <person name="Schuetz C."/>
            <person name="Walter U."/>
            <person name="Gambaryan S."/>
            <person name="Sickmann A."/>
        </authorList>
    </citation>
    <scope>PHOSPHORYLATION [LARGE SCALE ANALYSIS] AT SER-670</scope>
    <scope>IDENTIFICATION BY MASS SPECTROMETRY [LARGE SCALE ANALYSIS]</scope>
    <source>
        <tissue>Platelet</tissue>
    </source>
</reference>
<reference key="9">
    <citation type="journal article" date="2009" name="Biochemistry">
        <title>Role of the amino terminus of G protein-coupled receptor kinase 2 in receptor phosphorylation.</title>
        <authorList>
            <person name="Pao C.S."/>
            <person name="Barker B.L."/>
            <person name="Benovic J.L."/>
        </authorList>
    </citation>
    <scope>FUNCTION</scope>
    <scope>CATALYTIC ACTIVITY</scope>
    <scope>INTERACTION WITH ADRB2</scope>
    <scope>SITES REQUIRED FOR RECEPTOR PHOSPHORYLATION</scope>
    <scope>MUTAGENESIS OF ASP-3; LEU-4; GLU-5; 7-VAL-ALA-8 AND ASP-10</scope>
</reference>
<reference key="10">
    <citation type="journal article" date="2009" name="Cell. Signal.">
        <title>Dual regulation of lysophosphatidic acid (LPA1) receptor signalling by Ral and GRK.</title>
        <authorList>
            <person name="Aziziyeh A.I."/>
            <person name="Li T.T."/>
            <person name="Pape C."/>
            <person name="Pampillo M."/>
            <person name="Chidiac P."/>
            <person name="Possmayer F."/>
            <person name="Babwah A.V."/>
            <person name="Bhattacharya M."/>
        </authorList>
    </citation>
    <scope>FUNCTION</scope>
    <scope>INTERACTION WITH LPAR1; LPAR2 AND RALA</scope>
</reference>
<reference key="11">
    <citation type="journal article" date="2011" name="BMC Syst. Biol.">
        <title>Initial characterization of the human central proteome.</title>
        <authorList>
            <person name="Burkard T.R."/>
            <person name="Planyavsky M."/>
            <person name="Kaupe I."/>
            <person name="Breitwieser F.P."/>
            <person name="Buerckstuemmer T."/>
            <person name="Bennett K.L."/>
            <person name="Superti-Furga G."/>
            <person name="Colinge J."/>
        </authorList>
    </citation>
    <scope>IDENTIFICATION BY MASS SPECTROMETRY [LARGE SCALE ANALYSIS]</scope>
</reference>
<reference key="12">
    <citation type="journal article" date="2013" name="J. Proteome Res.">
        <title>Toward a comprehensive characterization of a human cancer cell phosphoproteome.</title>
        <authorList>
            <person name="Zhou H."/>
            <person name="Di Palma S."/>
            <person name="Preisinger C."/>
            <person name="Peng M."/>
            <person name="Polat A.N."/>
            <person name="Heck A.J."/>
            <person name="Mohammed S."/>
        </authorList>
    </citation>
    <scope>PHOSPHORYLATION [LARGE SCALE ANALYSIS] AT SER-670</scope>
    <scope>IDENTIFICATION BY MASS SPECTROMETRY [LARGE SCALE ANALYSIS]</scope>
    <source>
        <tissue>Cervix carcinoma</tissue>
        <tissue>Erythroleukemia</tissue>
    </source>
</reference>
<reference key="13">
    <citation type="journal article" date="2019" name="Am. J. Physiol.">
        <title>Airway smooth muscle photorelaxation via opsin receptor activation.</title>
        <authorList>
            <person name="Yim P.D."/>
            <person name="Gallos G."/>
            <person name="Perez-Zoghbi J.F."/>
            <person name="Zhang Y."/>
            <person name="Xu D."/>
            <person name="Wu A."/>
            <person name="Berkowitz D.E."/>
            <person name="Emala C.W."/>
        </authorList>
    </citation>
    <scope>FUNCTION</scope>
</reference>
<reference key="14">
    <citation type="journal article" date="1998" name="J. Biol. Chem.">
        <title>The solution structure and dynamics of the pleckstrin homology domain of G protein-coupled receptor kinase 2 (beta-adrenergic receptor kinase 1). A binding partner of Gbetagamma subunits.</title>
        <authorList>
            <person name="Fushman D."/>
            <person name="Najmabadi-Haske T."/>
            <person name="Cahill S."/>
            <person name="Zheng J."/>
            <person name="Levine H. III"/>
            <person name="Cowburn D."/>
        </authorList>
    </citation>
    <scope>STRUCTURE BY NMR OF 552-670</scope>
</reference>
<reference key="15">
    <citation type="journal article" date="2007" name="Nature">
        <title>Patterns of somatic mutation in human cancer genomes.</title>
        <authorList>
            <person name="Greenman C."/>
            <person name="Stephens P."/>
            <person name="Smith R."/>
            <person name="Dalgliesh G.L."/>
            <person name="Hunter C."/>
            <person name="Bignell G."/>
            <person name="Davies H."/>
            <person name="Teague J."/>
            <person name="Butler A."/>
            <person name="Stevens C."/>
            <person name="Edkins S."/>
            <person name="O'Meara S."/>
            <person name="Vastrik I."/>
            <person name="Schmidt E.E."/>
            <person name="Avis T."/>
            <person name="Barthorpe S."/>
            <person name="Bhamra G."/>
            <person name="Buck G."/>
            <person name="Choudhury B."/>
            <person name="Clements J."/>
            <person name="Cole J."/>
            <person name="Dicks E."/>
            <person name="Forbes S."/>
            <person name="Gray K."/>
            <person name="Halliday K."/>
            <person name="Harrison R."/>
            <person name="Hills K."/>
            <person name="Hinton J."/>
            <person name="Jenkinson A."/>
            <person name="Jones D."/>
            <person name="Menzies A."/>
            <person name="Mironenko T."/>
            <person name="Perry J."/>
            <person name="Raine K."/>
            <person name="Richardson D."/>
            <person name="Shepherd R."/>
            <person name="Small A."/>
            <person name="Tofts C."/>
            <person name="Varian J."/>
            <person name="Webb T."/>
            <person name="West S."/>
            <person name="Widaa S."/>
            <person name="Yates A."/>
            <person name="Cahill D.P."/>
            <person name="Louis D.N."/>
            <person name="Goldstraw P."/>
            <person name="Nicholson A.G."/>
            <person name="Brasseur F."/>
            <person name="Looijenga L."/>
            <person name="Weber B.L."/>
            <person name="Chiew Y.-E."/>
            <person name="DeFazio A."/>
            <person name="Greaves M.F."/>
            <person name="Green A.R."/>
            <person name="Campbell P."/>
            <person name="Birney E."/>
            <person name="Easton D.F."/>
            <person name="Chenevix-Trench G."/>
            <person name="Tan M.-H."/>
            <person name="Khoo S.K."/>
            <person name="Teh B.T."/>
            <person name="Yuen S.T."/>
            <person name="Leung S.Y."/>
            <person name="Wooster R."/>
            <person name="Futreal P.A."/>
            <person name="Stratton M.R."/>
        </authorList>
    </citation>
    <scope>VARIANTS [LARGE SCALE ANALYSIS] THR-184 AND GLN-578</scope>
</reference>
<comment type="function">
    <text evidence="1 10 11 12">Specifically phosphorylates the agonist-occupied form of the beta-adrenergic and closely related receptors, probably inducing a desensitization of them (PubMed:19715378). Key regulator of LPAR1 signaling (PubMed:19306925). Competes with RALA for binding to LPAR1 thus affecting the signaling properties of the receptor (PubMed:19306925). Desensitizes LPAR1 and LPAR2 in a phosphorylation-independent manner (PubMed:19306925). Positively regulates ciliary smoothened (SMO)-dependent Hedgehog (Hh) signaling pathway by facilitating the trafficking of SMO into the cilium and the stimulation of SMO activity (By similarity). Inhibits relaxation of airway smooth muscle in response to blue light (PubMed:30284927).</text>
</comment>
<comment type="catalytic activity">
    <reaction evidence="11">
        <text>[beta-adrenergic receptor] + ATP = [beta-adrenergic receptor]-phosphate + ADP + H(+)</text>
        <dbReference type="Rhea" id="RHEA:19429"/>
        <dbReference type="Rhea" id="RHEA-COMP:11222"/>
        <dbReference type="Rhea" id="RHEA-COMP:11223"/>
        <dbReference type="ChEBI" id="CHEBI:15378"/>
        <dbReference type="ChEBI" id="CHEBI:30616"/>
        <dbReference type="ChEBI" id="CHEBI:43176"/>
        <dbReference type="ChEBI" id="CHEBI:68546"/>
        <dbReference type="ChEBI" id="CHEBI:456216"/>
        <dbReference type="EC" id="2.7.11.15"/>
    </reaction>
    <physiologicalReaction direction="left-to-right" evidence="14">
        <dbReference type="Rhea" id="RHEA:19430"/>
    </physiologicalReaction>
</comment>
<comment type="activity regulation">
    <text evidence="1">In contrast to other AGC family kinases, the catalytic activity is solely regulated by the binding of substrates and ligands, not by phosphorylation of the kinase domain.</text>
</comment>
<comment type="subunit">
    <text evidence="1 2 11">Interacts with the heterodimer formed by GNB1 and GNG2 (By similarity). Interacts with GIT1 (By similarity). Interacts with, and phosphorylates chemokine-stimulated CCR5 (PubMed:10085131). Interacts with ARRB1 (PubMed:9501202). Interacts with LPAR1 and LPAR2 (PubMed:19306925). Interacts with RALA in response to LPAR1 activation (PubMed:19306925). ADRBK1 and RALA mutually inhibit each other's binding to LPAR1 (PubMed:19306925). Interacts with ADRB2 (PubMed:19715378).</text>
</comment>
<comment type="interaction">
    <interactant intactId="EBI-3904795">
        <id>P25098</id>
    </interactant>
    <interactant intactId="EBI-77613">
        <id>P05067</id>
        <label>APP</label>
    </interactant>
    <organismsDiffer>false</organismsDiffer>
    <experiments>3</experiments>
</comment>
<comment type="interaction">
    <interactant intactId="EBI-3904795">
        <id>P25098</id>
    </interactant>
    <interactant intactId="EBI-9087876">
        <id>P48730-2</id>
        <label>CSNK1D</label>
    </interactant>
    <organismsDiffer>false</organismsDiffer>
    <experiments>3</experiments>
</comment>
<comment type="interaction">
    <interactant intactId="EBI-3904795">
        <id>P25098</id>
    </interactant>
    <interactant intactId="EBI-720706">
        <id>P21860</id>
        <label>ERBB3</label>
    </interactant>
    <organismsDiffer>false</organismsDiffer>
    <experiments>3</experiments>
</comment>
<comment type="interaction">
    <interactant intactId="EBI-3904795">
        <id>P25098</id>
    </interactant>
    <interactant intactId="EBI-2869495">
        <id>P21462</id>
        <label>FPR1</label>
    </interactant>
    <organismsDiffer>false</organismsDiffer>
    <experiments>3</experiments>
</comment>
<comment type="interaction">
    <interactant intactId="EBI-3904795">
        <id>P25098</id>
    </interactant>
    <interactant intactId="EBI-466061">
        <id>Q9Y2X7</id>
        <label>GIT1</label>
    </interactant>
    <organismsDiffer>false</organismsDiffer>
    <experiments>5</experiments>
</comment>
<comment type="interaction">
    <interactant intactId="EBI-3904795">
        <id>P25098</id>
    </interactant>
    <interactant intactId="EBI-2875868">
        <id>P35626</id>
        <label>GRK3</label>
    </interactant>
    <organismsDiffer>false</organismsDiffer>
    <experiments>3</experiments>
</comment>
<comment type="interaction">
    <interactant intactId="EBI-3904795">
        <id>P25098</id>
    </interactant>
    <interactant intactId="EBI-389668">
        <id>Q00987</id>
        <label>MDM2</label>
    </interactant>
    <organismsDiffer>false</organismsDiffer>
    <experiments>4</experiments>
</comment>
<comment type="interaction">
    <interactant intactId="EBI-3904795">
        <id>P25098</id>
    </interactant>
    <interactant intactId="EBI-2846607">
        <id>P13591</id>
        <label>NCAM1</label>
    </interactant>
    <organismsDiffer>false</organismsDiffer>
    <experiments>3</experiments>
</comment>
<comment type="interaction">
    <interactant intactId="EBI-3904795">
        <id>P25098</id>
    </interactant>
    <interactant intactId="EBI-307386">
        <id>P25963</id>
        <label>NFKBIA</label>
    </interactant>
    <organismsDiffer>false</organismsDiffer>
    <experiments>2</experiments>
</comment>
<comment type="interaction">
    <interactant intactId="EBI-3904795">
        <id>P25098</id>
    </interactant>
    <interactant intactId="EBI-8775406">
        <id>Q13635</id>
        <label>PTCH1</label>
    </interactant>
    <organismsDiffer>false</organismsDiffer>
    <experiments>2</experiments>
</comment>
<comment type="interaction">
    <interactant intactId="EBI-3904795">
        <id>P25098</id>
    </interactant>
    <interactant intactId="EBI-3390054">
        <id>P0CG48</id>
        <label>UBC</label>
    </interactant>
    <organismsDiffer>false</organismsDiffer>
    <experiments>3</experiments>
</comment>
<comment type="subcellular location">
    <subcellularLocation>
        <location evidence="2">Cytoplasm</location>
    </subcellularLocation>
    <subcellularLocation>
        <location evidence="1">Cell membrane</location>
    </subcellularLocation>
    <subcellularLocation>
        <location evidence="2">Postsynapse</location>
    </subcellularLocation>
    <subcellularLocation>
        <location evidence="2">Presynapse</location>
    </subcellularLocation>
</comment>
<comment type="tissue specificity">
    <text evidence="8">Expressed in peripheral blood leukocytes.</text>
</comment>
<comment type="domain">
    <text evidence="1">The PH domain binds anionic phospholipids and helps recruiting ADRBK1 from the cytoplasm to plasma membrane close to activated receptors. It mediates binding to G protein beta and gamma subunits, competing with G-alpha subunits and other G-betagamma effectors.</text>
</comment>
<comment type="similarity">
    <text evidence="13">Belongs to the protein kinase superfamily. AGC Ser/Thr protein kinase family. GPRK subfamily.</text>
</comment>
<comment type="online information" name="Wikipedia">
    <link uri="https://en.wikipedia.org/wiki/Beta_Adrenergic_Receptor_Kinase"/>
    <text>Beta adrenergic receptor kinase entry</text>
</comment>
<proteinExistence type="evidence at protein level"/>
<protein>
    <recommendedName>
        <fullName>Beta-adrenergic receptor kinase 1</fullName>
        <shortName>Beta-ARK-1</shortName>
        <ecNumber evidence="11">2.7.11.15</ecNumber>
    </recommendedName>
    <alternativeName>
        <fullName evidence="15">G-protein coupled receptor kinase 2</fullName>
    </alternativeName>
</protein>